<proteinExistence type="inferred from homology"/>
<reference key="1">
    <citation type="journal article" date="2004" name="Proc. Natl. Acad. Sci. U.S.A.">
        <title>Complete genomes of two clinical Staphylococcus aureus strains: evidence for the rapid evolution of virulence and drug resistance.</title>
        <authorList>
            <person name="Holden M.T.G."/>
            <person name="Feil E.J."/>
            <person name="Lindsay J.A."/>
            <person name="Peacock S.J."/>
            <person name="Day N.P.J."/>
            <person name="Enright M.C."/>
            <person name="Foster T.J."/>
            <person name="Moore C.E."/>
            <person name="Hurst L."/>
            <person name="Atkin R."/>
            <person name="Barron A."/>
            <person name="Bason N."/>
            <person name="Bentley S.D."/>
            <person name="Chillingworth C."/>
            <person name="Chillingworth T."/>
            <person name="Churcher C."/>
            <person name="Clark L."/>
            <person name="Corton C."/>
            <person name="Cronin A."/>
            <person name="Doggett J."/>
            <person name="Dowd L."/>
            <person name="Feltwell T."/>
            <person name="Hance Z."/>
            <person name="Harris B."/>
            <person name="Hauser H."/>
            <person name="Holroyd S."/>
            <person name="Jagels K."/>
            <person name="James K.D."/>
            <person name="Lennard N."/>
            <person name="Line A."/>
            <person name="Mayes R."/>
            <person name="Moule S."/>
            <person name="Mungall K."/>
            <person name="Ormond D."/>
            <person name="Quail M.A."/>
            <person name="Rabbinowitsch E."/>
            <person name="Rutherford K.M."/>
            <person name="Sanders M."/>
            <person name="Sharp S."/>
            <person name="Simmonds M."/>
            <person name="Stevens K."/>
            <person name="Whitehead S."/>
            <person name="Barrell B.G."/>
            <person name="Spratt B.G."/>
            <person name="Parkhill J."/>
        </authorList>
    </citation>
    <scope>NUCLEOTIDE SEQUENCE [LARGE SCALE GENOMIC DNA]</scope>
    <source>
        <strain>MRSA252</strain>
    </source>
</reference>
<gene>
    <name type="ordered locus">SAR0680</name>
</gene>
<dbReference type="EMBL" id="BX571856">
    <property type="protein sequence ID" value="CAG39696.1"/>
    <property type="molecule type" value="Genomic_DNA"/>
</dbReference>
<dbReference type="RefSeq" id="WP_000532966.1">
    <property type="nucleotide sequence ID" value="NC_002952.2"/>
</dbReference>
<dbReference type="SMR" id="Q6GJ02"/>
<dbReference type="KEGG" id="sar:SAR0680"/>
<dbReference type="HOGENOM" id="CLU_062974_2_0_9"/>
<dbReference type="Proteomes" id="UP000000596">
    <property type="component" value="Chromosome"/>
</dbReference>
<dbReference type="GO" id="GO:0005829">
    <property type="term" value="C:cytosol"/>
    <property type="evidence" value="ECO:0007669"/>
    <property type="project" value="TreeGrafter"/>
</dbReference>
<dbReference type="GO" id="GO:0003677">
    <property type="term" value="F:DNA binding"/>
    <property type="evidence" value="ECO:0007669"/>
    <property type="project" value="UniProtKB-UniRule"/>
</dbReference>
<dbReference type="GO" id="GO:0006355">
    <property type="term" value="P:regulation of DNA-templated transcription"/>
    <property type="evidence" value="ECO:0007669"/>
    <property type="project" value="UniProtKB-UniRule"/>
</dbReference>
<dbReference type="FunFam" id="1.10.10.200:FF:000003">
    <property type="entry name" value="Probable transcriptional regulatory protein YeeN"/>
    <property type="match status" value="1"/>
</dbReference>
<dbReference type="Gene3D" id="1.10.10.200">
    <property type="match status" value="1"/>
</dbReference>
<dbReference type="Gene3D" id="3.30.70.980">
    <property type="match status" value="2"/>
</dbReference>
<dbReference type="HAMAP" id="MF_00693">
    <property type="entry name" value="Transcrip_reg_TACO1"/>
    <property type="match status" value="1"/>
</dbReference>
<dbReference type="HAMAP" id="MF_00918">
    <property type="entry name" value="Transcrip_reg_TACO1_YeeN"/>
    <property type="match status" value="1"/>
</dbReference>
<dbReference type="InterPro" id="IPR017856">
    <property type="entry name" value="Integrase-like_N"/>
</dbReference>
<dbReference type="InterPro" id="IPR048300">
    <property type="entry name" value="TACO1_YebC-like_2nd/3rd_dom"/>
</dbReference>
<dbReference type="InterPro" id="IPR049083">
    <property type="entry name" value="TACO1_YebC_N"/>
</dbReference>
<dbReference type="InterPro" id="IPR002876">
    <property type="entry name" value="Transcrip_reg_TACO1-like"/>
</dbReference>
<dbReference type="InterPro" id="IPR026564">
    <property type="entry name" value="Transcrip_reg_TACO1-like_dom3"/>
</dbReference>
<dbReference type="InterPro" id="IPR026562">
    <property type="entry name" value="Transcrip_reg_TACO1_YeeN"/>
</dbReference>
<dbReference type="InterPro" id="IPR029072">
    <property type="entry name" value="YebC-like"/>
</dbReference>
<dbReference type="NCBIfam" id="NF001030">
    <property type="entry name" value="PRK00110.1"/>
    <property type="match status" value="1"/>
</dbReference>
<dbReference type="NCBIfam" id="NF009044">
    <property type="entry name" value="PRK12378.1"/>
    <property type="match status" value="1"/>
</dbReference>
<dbReference type="NCBIfam" id="TIGR01033">
    <property type="entry name" value="YebC/PmpR family DNA-binding transcriptional regulator"/>
    <property type="match status" value="1"/>
</dbReference>
<dbReference type="PANTHER" id="PTHR12532">
    <property type="entry name" value="TRANSLATIONAL ACTIVATOR OF CYTOCHROME C OXIDASE 1"/>
    <property type="match status" value="1"/>
</dbReference>
<dbReference type="PANTHER" id="PTHR12532:SF0">
    <property type="entry name" value="TRANSLATIONAL ACTIVATOR OF CYTOCHROME C OXIDASE 1"/>
    <property type="match status" value="1"/>
</dbReference>
<dbReference type="Pfam" id="PF20772">
    <property type="entry name" value="TACO1_YebC_N"/>
    <property type="match status" value="1"/>
</dbReference>
<dbReference type="Pfam" id="PF01709">
    <property type="entry name" value="Transcrip_reg"/>
    <property type="match status" value="1"/>
</dbReference>
<dbReference type="SUPFAM" id="SSF75625">
    <property type="entry name" value="YebC-like"/>
    <property type="match status" value="1"/>
</dbReference>
<feature type="chain" id="PRO_0000175894" description="Probable transcriptional regulatory protein SAR0680">
    <location>
        <begin position="1"/>
        <end position="238"/>
    </location>
</feature>
<accession>Q6GJ02</accession>
<evidence type="ECO:0000255" key="1">
    <source>
        <dbReference type="HAMAP-Rule" id="MF_00918"/>
    </source>
</evidence>
<name>Y680_STAAR</name>
<protein>
    <recommendedName>
        <fullName evidence="1">Probable transcriptional regulatory protein SAR0680</fullName>
    </recommendedName>
</protein>
<keyword id="KW-0963">Cytoplasm</keyword>
<keyword id="KW-0238">DNA-binding</keyword>
<keyword id="KW-0804">Transcription</keyword>
<keyword id="KW-0805">Transcription regulation</keyword>
<organism>
    <name type="scientific">Staphylococcus aureus (strain MRSA252)</name>
    <dbReference type="NCBI Taxonomy" id="282458"/>
    <lineage>
        <taxon>Bacteria</taxon>
        <taxon>Bacillati</taxon>
        <taxon>Bacillota</taxon>
        <taxon>Bacilli</taxon>
        <taxon>Bacillales</taxon>
        <taxon>Staphylococcaceae</taxon>
        <taxon>Staphylococcus</taxon>
    </lineage>
</organism>
<comment type="subcellular location">
    <subcellularLocation>
        <location evidence="1">Cytoplasm</location>
    </subcellularLocation>
</comment>
<comment type="similarity">
    <text evidence="1">Belongs to the TACO1 family. YeeN subfamily.</text>
</comment>
<sequence>MGRKWNNIKEKKAQKDKNTSRIYAKFGKEIYVAAKSGEPNPESNQALRLVLERAKTYSVPNHIIEKAIDKAKGAGDENFDHLRYEGFGPSGSMLIVDALTNNVNRTASDVRAAFGKNGGNMGVSGSVAYMFDHVATFGIEGKSVDEILETLMEQDVDVNDVIDDNGLTIVYAEPDQFAVVQDALRAAGVEEFKVAEFEMLPQTDIELSEADQVTFEKLIDALEDLEDVQNVFHNVDLK</sequence>